<dbReference type="EC" id="3.2.1.8"/>
<dbReference type="EMBL" id="Z11127">
    <property type="protein sequence ID" value="CAA77476.1"/>
    <property type="molecule type" value="Genomic_DNA"/>
</dbReference>
<dbReference type="PIR" id="S20907">
    <property type="entry name" value="S20907"/>
</dbReference>
<dbReference type="SMR" id="P29126"/>
<dbReference type="STRING" id="1265.SAMN02910280_2673"/>
<dbReference type="CAZy" id="GH10">
    <property type="family name" value="Glycoside Hydrolase Family 10"/>
</dbReference>
<dbReference type="CAZy" id="GH11">
    <property type="family name" value="Glycoside Hydrolase Family 11"/>
</dbReference>
<dbReference type="UniPathway" id="UPA00114"/>
<dbReference type="GO" id="GO:0031176">
    <property type="term" value="F:endo-1,4-beta-xylanase activity"/>
    <property type="evidence" value="ECO:0007669"/>
    <property type="project" value="UniProtKB-EC"/>
</dbReference>
<dbReference type="GO" id="GO:0045493">
    <property type="term" value="P:xylan catabolic process"/>
    <property type="evidence" value="ECO:0007669"/>
    <property type="project" value="UniProtKB-UniPathway"/>
</dbReference>
<dbReference type="Gene3D" id="2.60.120.180">
    <property type="match status" value="1"/>
</dbReference>
<dbReference type="Gene3D" id="3.20.20.80">
    <property type="entry name" value="Glycosidases"/>
    <property type="match status" value="1"/>
</dbReference>
<dbReference type="InterPro" id="IPR013320">
    <property type="entry name" value="ConA-like_dom_sf"/>
</dbReference>
<dbReference type="InterPro" id="IPR031158">
    <property type="entry name" value="GH10_AS"/>
</dbReference>
<dbReference type="InterPro" id="IPR001000">
    <property type="entry name" value="GH10_dom"/>
</dbReference>
<dbReference type="InterPro" id="IPR013319">
    <property type="entry name" value="GH11/12"/>
</dbReference>
<dbReference type="InterPro" id="IPR018208">
    <property type="entry name" value="GH11_AS_1"/>
</dbReference>
<dbReference type="InterPro" id="IPR033119">
    <property type="entry name" value="GH11_AS_2"/>
</dbReference>
<dbReference type="InterPro" id="IPR033123">
    <property type="entry name" value="GH11_dom"/>
</dbReference>
<dbReference type="InterPro" id="IPR001137">
    <property type="entry name" value="Glyco_hydro_11"/>
</dbReference>
<dbReference type="InterPro" id="IPR017853">
    <property type="entry name" value="Glycoside_hydrolase_SF"/>
</dbReference>
<dbReference type="PANTHER" id="PTHR46828">
    <property type="entry name" value="ENDO-1,4-BETA-XYLANASE A-RELATED"/>
    <property type="match status" value="1"/>
</dbReference>
<dbReference type="PANTHER" id="PTHR46828:SF2">
    <property type="entry name" value="ENDO-1,4-BETA-XYLANASE A-RELATED"/>
    <property type="match status" value="1"/>
</dbReference>
<dbReference type="Pfam" id="PF00331">
    <property type="entry name" value="Glyco_hydro_10"/>
    <property type="match status" value="1"/>
</dbReference>
<dbReference type="Pfam" id="PF00457">
    <property type="entry name" value="Glyco_hydro_11"/>
    <property type="match status" value="1"/>
</dbReference>
<dbReference type="PRINTS" id="PR00911">
    <property type="entry name" value="GLHYDRLASE11"/>
</dbReference>
<dbReference type="SMART" id="SM00633">
    <property type="entry name" value="Glyco_10"/>
    <property type="match status" value="1"/>
</dbReference>
<dbReference type="SUPFAM" id="SSF51445">
    <property type="entry name" value="(Trans)glycosidases"/>
    <property type="match status" value="1"/>
</dbReference>
<dbReference type="SUPFAM" id="SSF49899">
    <property type="entry name" value="Concanavalin A-like lectins/glucanases"/>
    <property type="match status" value="1"/>
</dbReference>
<dbReference type="PROSITE" id="PS00591">
    <property type="entry name" value="GH10_1"/>
    <property type="match status" value="1"/>
</dbReference>
<dbReference type="PROSITE" id="PS51760">
    <property type="entry name" value="GH10_2"/>
    <property type="match status" value="1"/>
</dbReference>
<dbReference type="PROSITE" id="PS00776">
    <property type="entry name" value="GH11_1"/>
    <property type="match status" value="1"/>
</dbReference>
<dbReference type="PROSITE" id="PS00777">
    <property type="entry name" value="GH11_2"/>
    <property type="match status" value="1"/>
</dbReference>
<dbReference type="PROSITE" id="PS51761">
    <property type="entry name" value="GH11_3"/>
    <property type="match status" value="1"/>
</dbReference>
<name>XYNA_RUMFL</name>
<sequence>MKLSKIKKVLSGTVSALMIASAAPVVASAADQQTRGNVGGYDYEMWNQNGQGQASMNPGAGSFTCSWSNIENFLARMGKNYDSQKKNYKAFGNIVLTYDVEYTPRGNSYMCVYGWTRNPLMEYYIVEGWGDWRPPGNDGEVKGTVSANGNTYDIRKTMRYNQPSLDGTATFPQYWSVRQTSGSANNQTNYMKGTIDVTKHFDAWSAAGLDMSGTLYEVSLNIEGYRSNGSANVKSVSVTQGGSSDNGGQQQNNDWNQQNNNQQQNNDWNNWGQQNNDWNQWNNQGQQNNDWNNWGQQNNDWNQWNNQGQQQNNDWNNWGQQNNDWNQWNNQGQQQNNDWNNWGQQNNDWNQWNNQGQQQNNDWNNWGQQNNDWNQWNNQNNNQQNAWNGWDNNNNWNQNNQQQNNWDWNNQNNWNNNQQQNNDWNQWNNQNNWNNNQQQNNDWNQWNNQGQQNNDWNQWNNQNNWNQNNNQQNAWNGWDNNNNWNQWDQNNQWNNQQQNNTWDWNNQNNWNNNQQNNDWNQWNNQGQQQNNDWNQWNNQNNNQNNGWDWNNQNNWNQNNNQQNAWNGWDNNNNWNQWGGQNNDWNNQQQNNDWNQWNNQGQQQNNDWNNQNNWNQGQQNNNNSAGSSDSLKGAFSKYFKIGTSVSPHELNSGADFLKKHYNSITPENELKPESILDQGACQQKGNNVNTQISLSRAAQTLKFCEQNGIALRGHTFVWYSQTPDWFFRENFSQNGAYVSKDIMNQRLESMIKNTFAALKSQYPNLDVYSYDVCNELFLNNGGGMRGADNSNWVKIYGDDSFVINAFKYARQYAPAGCKLYLNDYNEYIPAKTNDIYNMAMKLKQLGYIDGIGMQSHLATNYPDANTYETALKKFLSTGLEVQITELDITCTNSAEQADLYEKIFKLAMQNSAQIPAVTIWGTQDTVSWRSSQNPLLFSAGYQPKPAYDRVMALAK</sequence>
<gene>
    <name type="primary">xynA</name>
</gene>
<keyword id="KW-0119">Carbohydrate metabolism</keyword>
<keyword id="KW-0326">Glycosidase</keyword>
<keyword id="KW-0378">Hydrolase</keyword>
<keyword id="KW-0511">Multifunctional enzyme</keyword>
<keyword id="KW-0624">Polysaccharide degradation</keyword>
<keyword id="KW-0677">Repeat</keyword>
<keyword id="KW-0732">Signal</keyword>
<keyword id="KW-0858">Xylan degradation</keyword>
<proteinExistence type="inferred from homology"/>
<accession>P29126</accession>
<protein>
    <recommendedName>
        <fullName>Bifunctional endo-1,4-beta-xylanase XylA</fullName>
        <ecNumber>3.2.1.8</ecNumber>
    </recommendedName>
</protein>
<evidence type="ECO:0000250" key="1"/>
<evidence type="ECO:0000255" key="2"/>
<evidence type="ECO:0000255" key="3">
    <source>
        <dbReference type="PROSITE-ProRule" id="PRU01096"/>
    </source>
</evidence>
<evidence type="ECO:0000255" key="4">
    <source>
        <dbReference type="PROSITE-ProRule" id="PRU01097"/>
    </source>
</evidence>
<evidence type="ECO:0000255" key="5">
    <source>
        <dbReference type="PROSITE-ProRule" id="PRU10063"/>
    </source>
</evidence>
<evidence type="ECO:0000256" key="6">
    <source>
        <dbReference type="SAM" id="MobiDB-lite"/>
    </source>
</evidence>
<evidence type="ECO:0000305" key="7"/>
<organism>
    <name type="scientific">Ruminococcus flavefaciens</name>
    <dbReference type="NCBI Taxonomy" id="1265"/>
    <lineage>
        <taxon>Bacteria</taxon>
        <taxon>Bacillati</taxon>
        <taxon>Bacillota</taxon>
        <taxon>Clostridia</taxon>
        <taxon>Eubacteriales</taxon>
        <taxon>Oscillospiraceae</taxon>
        <taxon>Ruminococcus</taxon>
    </lineage>
</organism>
<reference key="1">
    <citation type="journal article" date="1992" name="Mol. Microbiol.">
        <title>A bifunctional xylanase encoded by the xynA gene of the rumen cellulolytic bacterium Ruminococcus flavefaciens 17 comprises two dissimilar domains linked by an asparagine/glutamine-rich sequence.</title>
        <authorList>
            <person name="Zhang J.-X."/>
            <person name="Flint H.J."/>
        </authorList>
    </citation>
    <scope>NUCLEOTIDE SEQUENCE [GENOMIC DNA]</scope>
    <source>
        <strain>17</strain>
    </source>
</reference>
<feature type="signal peptide" description="Or 28, or 29" evidence="2">
    <location>
        <begin position="1"/>
        <end position="27"/>
    </location>
</feature>
<feature type="chain" id="PRO_0000008015" description="Bifunctional endo-1,4-beta-xylanase XylA">
    <location>
        <begin position="28"/>
        <end position="954"/>
    </location>
</feature>
<feature type="domain" description="GH11" evidence="4">
    <location>
        <begin position="29"/>
        <end position="236"/>
    </location>
</feature>
<feature type="domain" description="GH10" evidence="3">
    <location>
        <begin position="624"/>
        <end position="952"/>
    </location>
</feature>
<feature type="region of interest" description="Disordered" evidence="6">
    <location>
        <begin position="233"/>
        <end position="628"/>
    </location>
</feature>
<feature type="compositionally biased region" description="Polar residues" evidence="6">
    <location>
        <begin position="233"/>
        <end position="243"/>
    </location>
</feature>
<feature type="compositionally biased region" description="Low complexity" evidence="6">
    <location>
        <begin position="246"/>
        <end position="622"/>
    </location>
</feature>
<feature type="active site" description="Nucleophile" evidence="1">
    <location>
        <position position="122"/>
    </location>
</feature>
<feature type="active site" description="Proton donor" evidence="5">
    <location>
        <position position="223"/>
    </location>
</feature>
<feature type="active site" description="Proton donor" evidence="5">
    <location>
        <position position="774"/>
    </location>
</feature>
<feature type="active site" description="Nucleophile" evidence="1">
    <location>
        <position position="884"/>
    </location>
</feature>
<comment type="function">
    <text>Xylanase domain releases more xylo-oligosaccharides and GH10 domain more xylose.</text>
</comment>
<comment type="catalytic activity">
    <reaction>
        <text>Endohydrolysis of (1-&gt;4)-beta-D-xylosidic linkages in xylans.</text>
        <dbReference type="EC" id="3.2.1.8"/>
    </reaction>
</comment>
<comment type="pathway">
    <text>Glycan degradation; xylan degradation.</text>
</comment>
<comment type="similarity">
    <text evidence="7">In the N-terminal section; belongs to the glycosyl hydrolase 11 (cellulase G) family.</text>
</comment>
<comment type="similarity">
    <text evidence="7">In the C-terminal section; belongs to the glycosyl hydrolase 10 (cellulase F) family.</text>
</comment>